<keyword id="KW-0007">Acetylation</keyword>
<keyword id="KW-0113">Calvin cycle</keyword>
<keyword id="KW-0120">Carbon dioxide fixation</keyword>
<keyword id="KW-0150">Chloroplast</keyword>
<keyword id="KW-1015">Disulfide bond</keyword>
<keyword id="KW-0456">Lyase</keyword>
<keyword id="KW-0460">Magnesium</keyword>
<keyword id="KW-0479">Metal-binding</keyword>
<keyword id="KW-0488">Methylation</keyword>
<keyword id="KW-0503">Monooxygenase</keyword>
<keyword id="KW-0560">Oxidoreductase</keyword>
<keyword id="KW-0601">Photorespiration</keyword>
<keyword id="KW-0602">Photosynthesis</keyword>
<keyword id="KW-0934">Plastid</keyword>
<reference key="1">
    <citation type="submission" date="1991-12" db="EMBL/GenBank/DDBJ databases">
        <title>Systematics of Caryophyllales using large subunit of ribulose-1, 5-bisphosphate carboxylase/oxygenase (rbcL) gene sequence data.</title>
        <authorList>
            <person name="Rettig J.H."/>
            <person name="Wilson H.D."/>
            <person name="Manhart J.R."/>
        </authorList>
    </citation>
    <scope>NUCLEOTIDE SEQUENCE [GENOMIC DNA]</scope>
</reference>
<dbReference type="EC" id="4.1.1.39" evidence="1"/>
<dbReference type="EMBL" id="M62569">
    <property type="protein sequence ID" value="AAA84595.1"/>
    <property type="molecule type" value="Genomic_DNA"/>
</dbReference>
<dbReference type="SMR" id="P25834"/>
<dbReference type="GO" id="GO:0009507">
    <property type="term" value="C:chloroplast"/>
    <property type="evidence" value="ECO:0007669"/>
    <property type="project" value="UniProtKB-SubCell"/>
</dbReference>
<dbReference type="GO" id="GO:0000287">
    <property type="term" value="F:magnesium ion binding"/>
    <property type="evidence" value="ECO:0007669"/>
    <property type="project" value="UniProtKB-UniRule"/>
</dbReference>
<dbReference type="GO" id="GO:0004497">
    <property type="term" value="F:monooxygenase activity"/>
    <property type="evidence" value="ECO:0007669"/>
    <property type="project" value="UniProtKB-KW"/>
</dbReference>
<dbReference type="GO" id="GO:0016984">
    <property type="term" value="F:ribulose-bisphosphate carboxylase activity"/>
    <property type="evidence" value="ECO:0007669"/>
    <property type="project" value="UniProtKB-UniRule"/>
</dbReference>
<dbReference type="GO" id="GO:0009853">
    <property type="term" value="P:photorespiration"/>
    <property type="evidence" value="ECO:0007669"/>
    <property type="project" value="UniProtKB-KW"/>
</dbReference>
<dbReference type="GO" id="GO:0019253">
    <property type="term" value="P:reductive pentose-phosphate cycle"/>
    <property type="evidence" value="ECO:0007669"/>
    <property type="project" value="UniProtKB-UniRule"/>
</dbReference>
<dbReference type="CDD" id="cd08212">
    <property type="entry name" value="RuBisCO_large_I"/>
    <property type="match status" value="1"/>
</dbReference>
<dbReference type="FunFam" id="3.20.20.110:FF:000001">
    <property type="entry name" value="Ribulose bisphosphate carboxylase large chain"/>
    <property type="match status" value="1"/>
</dbReference>
<dbReference type="FunFam" id="3.30.70.150:FF:000001">
    <property type="entry name" value="Ribulose bisphosphate carboxylase large chain"/>
    <property type="match status" value="1"/>
</dbReference>
<dbReference type="Gene3D" id="3.20.20.110">
    <property type="entry name" value="Ribulose bisphosphate carboxylase, large subunit, C-terminal domain"/>
    <property type="match status" value="1"/>
</dbReference>
<dbReference type="Gene3D" id="3.30.70.150">
    <property type="entry name" value="RuBisCO large subunit, N-terminal domain"/>
    <property type="match status" value="1"/>
</dbReference>
<dbReference type="HAMAP" id="MF_01338">
    <property type="entry name" value="RuBisCO_L_type1"/>
    <property type="match status" value="1"/>
</dbReference>
<dbReference type="InterPro" id="IPR033966">
    <property type="entry name" value="RuBisCO"/>
</dbReference>
<dbReference type="InterPro" id="IPR020878">
    <property type="entry name" value="RuBisCo_large_chain_AS"/>
</dbReference>
<dbReference type="InterPro" id="IPR000685">
    <property type="entry name" value="RuBisCO_lsu_C"/>
</dbReference>
<dbReference type="InterPro" id="IPR036376">
    <property type="entry name" value="RuBisCO_lsu_C_sf"/>
</dbReference>
<dbReference type="InterPro" id="IPR017443">
    <property type="entry name" value="RuBisCO_lsu_fd_N"/>
</dbReference>
<dbReference type="InterPro" id="IPR036422">
    <property type="entry name" value="RuBisCO_lsu_N_sf"/>
</dbReference>
<dbReference type="InterPro" id="IPR020888">
    <property type="entry name" value="RuBisCO_lsuI"/>
</dbReference>
<dbReference type="NCBIfam" id="NF003252">
    <property type="entry name" value="PRK04208.1"/>
    <property type="match status" value="1"/>
</dbReference>
<dbReference type="PANTHER" id="PTHR42704">
    <property type="entry name" value="RIBULOSE BISPHOSPHATE CARBOXYLASE"/>
    <property type="match status" value="1"/>
</dbReference>
<dbReference type="PANTHER" id="PTHR42704:SF15">
    <property type="entry name" value="RIBULOSE BISPHOSPHATE CARBOXYLASE LARGE CHAIN"/>
    <property type="match status" value="1"/>
</dbReference>
<dbReference type="Pfam" id="PF00016">
    <property type="entry name" value="RuBisCO_large"/>
    <property type="match status" value="1"/>
</dbReference>
<dbReference type="Pfam" id="PF02788">
    <property type="entry name" value="RuBisCO_large_N"/>
    <property type="match status" value="1"/>
</dbReference>
<dbReference type="SFLD" id="SFLDG01052">
    <property type="entry name" value="RuBisCO"/>
    <property type="match status" value="1"/>
</dbReference>
<dbReference type="SFLD" id="SFLDS00014">
    <property type="entry name" value="RuBisCO"/>
    <property type="match status" value="1"/>
</dbReference>
<dbReference type="SFLD" id="SFLDG00301">
    <property type="entry name" value="RuBisCO-like_proteins"/>
    <property type="match status" value="1"/>
</dbReference>
<dbReference type="SUPFAM" id="SSF51649">
    <property type="entry name" value="RuBisCo, C-terminal domain"/>
    <property type="match status" value="1"/>
</dbReference>
<dbReference type="SUPFAM" id="SSF54966">
    <property type="entry name" value="RuBisCO, large subunit, small (N-terminal) domain"/>
    <property type="match status" value="1"/>
</dbReference>
<dbReference type="PROSITE" id="PS00157">
    <property type="entry name" value="RUBISCO_LARGE"/>
    <property type="match status" value="1"/>
</dbReference>
<name>RBL_RIVHU</name>
<gene>
    <name evidence="1" type="primary">rbcL</name>
</gene>
<feature type="propeptide" id="PRO_0000031389" evidence="1">
    <location>
        <begin position="1"/>
        <end position="2"/>
    </location>
</feature>
<feature type="chain" id="PRO_0000031390" description="Ribulose bisphosphate carboxylase large chain">
    <location>
        <begin position="3"/>
        <end position="480"/>
    </location>
</feature>
<feature type="active site" description="Proton acceptor" evidence="1">
    <location>
        <position position="175"/>
    </location>
</feature>
<feature type="active site" description="Proton acceptor" evidence="1">
    <location>
        <position position="294"/>
    </location>
</feature>
<feature type="binding site" description="in homodimeric partner" evidence="1">
    <location>
        <position position="123"/>
    </location>
    <ligand>
        <name>substrate</name>
    </ligand>
</feature>
<feature type="binding site" evidence="1">
    <location>
        <position position="173"/>
    </location>
    <ligand>
        <name>substrate</name>
    </ligand>
</feature>
<feature type="binding site" evidence="1">
    <location>
        <position position="177"/>
    </location>
    <ligand>
        <name>substrate</name>
    </ligand>
</feature>
<feature type="binding site" description="via carbamate group" evidence="1">
    <location>
        <position position="201"/>
    </location>
    <ligand>
        <name>Mg(2+)</name>
        <dbReference type="ChEBI" id="CHEBI:18420"/>
    </ligand>
</feature>
<feature type="binding site" evidence="1">
    <location>
        <position position="203"/>
    </location>
    <ligand>
        <name>Mg(2+)</name>
        <dbReference type="ChEBI" id="CHEBI:18420"/>
    </ligand>
</feature>
<feature type="binding site" evidence="1">
    <location>
        <position position="204"/>
    </location>
    <ligand>
        <name>Mg(2+)</name>
        <dbReference type="ChEBI" id="CHEBI:18420"/>
    </ligand>
</feature>
<feature type="binding site" evidence="1">
    <location>
        <position position="295"/>
    </location>
    <ligand>
        <name>substrate</name>
    </ligand>
</feature>
<feature type="binding site" evidence="1">
    <location>
        <position position="327"/>
    </location>
    <ligand>
        <name>substrate</name>
    </ligand>
</feature>
<feature type="binding site" evidence="1">
    <location>
        <position position="379"/>
    </location>
    <ligand>
        <name>substrate</name>
    </ligand>
</feature>
<feature type="site" description="Transition state stabilizer" evidence="1">
    <location>
        <position position="334"/>
    </location>
</feature>
<feature type="modified residue" description="N-acetylproline" evidence="1">
    <location>
        <position position="3"/>
    </location>
</feature>
<feature type="modified residue" description="N6,N6,N6-trimethyllysine" evidence="1">
    <location>
        <position position="14"/>
    </location>
</feature>
<feature type="modified residue" description="N6-carboxylysine" evidence="1">
    <location>
        <position position="201"/>
    </location>
</feature>
<feature type="disulfide bond" description="Interchain; in linked form" evidence="1">
    <location>
        <position position="247"/>
    </location>
</feature>
<sequence>MSPQTETKASVGFKAGVKDYKLTYYTPQYKPLDTDILAAFRVTPQPGVPSEEAGAAVAAESSTGTWTTVWTDGLTSLDRYKGRCYHIDPVPGEENQYICYVAYPLDLFEEGSVTNMFTSIVGNVFGFKALRALRLEDLRVPISYIKTFQGPPHGIQVERDKLNKYGRPLLGCTIKPKLGLSAKNYGRAVYECLRGGLDFTKDDENVNSQPFMRWRDRFLFCAEALFKSQAETGEIKGHYLNATAGTCEEMMKRAVFARELGAPIVMHDYLTGGFTANTTLAHYCRDNGLLLHIHRAMHAVIDMQKNHGMQFRVLAKALRLSGGDHIHAGTVVGKLEGERDITLGFVDLLRDDHTEIDPDRGIYFTQSWVSTPGVLPVASGGIHVWHMPALTEIFGDDSVLQFGGGTLGHPWGNAPGAVANRVALEACVQARNEGRDLAREGATIIREASKWSPELAAACEVWKEIKFEFPAVDILDKKKS</sequence>
<geneLocation type="chloroplast"/>
<evidence type="ECO:0000255" key="1">
    <source>
        <dbReference type="HAMAP-Rule" id="MF_01338"/>
    </source>
</evidence>
<protein>
    <recommendedName>
        <fullName evidence="1">Ribulose bisphosphate carboxylase large chain</fullName>
        <shortName evidence="1">RuBisCO large subunit</shortName>
        <ecNumber evidence="1">4.1.1.39</ecNumber>
    </recommendedName>
</protein>
<organism>
    <name type="scientific">Rivina humilis</name>
    <name type="common">Rougeplant</name>
    <name type="synonym">Rivina laevis</name>
    <dbReference type="NCBI Taxonomy" id="3533"/>
    <lineage>
        <taxon>Eukaryota</taxon>
        <taxon>Viridiplantae</taxon>
        <taxon>Streptophyta</taxon>
        <taxon>Embryophyta</taxon>
        <taxon>Tracheophyta</taxon>
        <taxon>Spermatophyta</taxon>
        <taxon>Magnoliopsida</taxon>
        <taxon>eudicotyledons</taxon>
        <taxon>Gunneridae</taxon>
        <taxon>Pentapetalae</taxon>
        <taxon>Caryophyllales</taxon>
        <taxon>Petiveriaceae</taxon>
        <taxon>Rivineae</taxon>
        <taxon>Rivina</taxon>
    </lineage>
</organism>
<comment type="function">
    <text evidence="1">RuBisCO catalyzes two reactions: the carboxylation of D-ribulose 1,5-bisphosphate, the primary event in carbon dioxide fixation, as well as the oxidative fragmentation of the pentose substrate in the photorespiration process. Both reactions occur simultaneously and in competition at the same active site.</text>
</comment>
<comment type="catalytic activity">
    <reaction evidence="1">
        <text>2 (2R)-3-phosphoglycerate + 2 H(+) = D-ribulose 1,5-bisphosphate + CO2 + H2O</text>
        <dbReference type="Rhea" id="RHEA:23124"/>
        <dbReference type="ChEBI" id="CHEBI:15377"/>
        <dbReference type="ChEBI" id="CHEBI:15378"/>
        <dbReference type="ChEBI" id="CHEBI:16526"/>
        <dbReference type="ChEBI" id="CHEBI:57870"/>
        <dbReference type="ChEBI" id="CHEBI:58272"/>
        <dbReference type="EC" id="4.1.1.39"/>
    </reaction>
</comment>
<comment type="catalytic activity">
    <reaction evidence="1">
        <text>D-ribulose 1,5-bisphosphate + O2 = 2-phosphoglycolate + (2R)-3-phosphoglycerate + 2 H(+)</text>
        <dbReference type="Rhea" id="RHEA:36631"/>
        <dbReference type="ChEBI" id="CHEBI:15378"/>
        <dbReference type="ChEBI" id="CHEBI:15379"/>
        <dbReference type="ChEBI" id="CHEBI:57870"/>
        <dbReference type="ChEBI" id="CHEBI:58033"/>
        <dbReference type="ChEBI" id="CHEBI:58272"/>
    </reaction>
</comment>
<comment type="cofactor">
    <cofactor evidence="1">
        <name>Mg(2+)</name>
        <dbReference type="ChEBI" id="CHEBI:18420"/>
    </cofactor>
    <text evidence="1">Binds 1 Mg(2+) ion per subunit.</text>
</comment>
<comment type="subunit">
    <text evidence="1">Heterohexadecamer of 8 large chains and 8 small chains; disulfide-linked. The disulfide link is formed within the large subunit homodimers.</text>
</comment>
<comment type="subcellular location">
    <subcellularLocation>
        <location>Plastid</location>
        <location>Chloroplast</location>
    </subcellularLocation>
</comment>
<comment type="PTM">
    <text evidence="1">The disulfide bond which can form in the large chain dimeric partners within the hexadecamer appears to be associated with oxidative stress and protein turnover.</text>
</comment>
<comment type="miscellaneous">
    <text evidence="1">The basic functional RuBisCO is composed of a large chain homodimer in a 'head-to-tail' conformation. In form I RuBisCO this homodimer is arranged in a barrel-like tetramer with the small subunits forming a tetrameric 'cap' on each end of the 'barrel'.</text>
</comment>
<comment type="similarity">
    <text evidence="1">Belongs to the RuBisCO large chain family. Type I subfamily.</text>
</comment>
<proteinExistence type="inferred from homology"/>
<accession>P25834</accession>